<reference key="1">
    <citation type="journal article" date="2003" name="Nature">
        <title>The DNA sequence of human chromosome 7.</title>
        <authorList>
            <person name="Hillier L.W."/>
            <person name="Fulton R.S."/>
            <person name="Fulton L.A."/>
            <person name="Graves T.A."/>
            <person name="Pepin K.H."/>
            <person name="Wagner-McPherson C."/>
            <person name="Layman D."/>
            <person name="Maas J."/>
            <person name="Jaeger S."/>
            <person name="Walker R."/>
            <person name="Wylie K."/>
            <person name="Sekhon M."/>
            <person name="Becker M.C."/>
            <person name="O'Laughlin M.D."/>
            <person name="Schaller M.E."/>
            <person name="Fewell G.A."/>
            <person name="Delehaunty K.D."/>
            <person name="Miner T.L."/>
            <person name="Nash W.E."/>
            <person name="Cordes M."/>
            <person name="Du H."/>
            <person name="Sun H."/>
            <person name="Edwards J."/>
            <person name="Bradshaw-Cordum H."/>
            <person name="Ali J."/>
            <person name="Andrews S."/>
            <person name="Isak A."/>
            <person name="Vanbrunt A."/>
            <person name="Nguyen C."/>
            <person name="Du F."/>
            <person name="Lamar B."/>
            <person name="Courtney L."/>
            <person name="Kalicki J."/>
            <person name="Ozersky P."/>
            <person name="Bielicki L."/>
            <person name="Scott K."/>
            <person name="Holmes A."/>
            <person name="Harkins R."/>
            <person name="Harris A."/>
            <person name="Strong C.M."/>
            <person name="Hou S."/>
            <person name="Tomlinson C."/>
            <person name="Dauphin-Kohlberg S."/>
            <person name="Kozlowicz-Reilly A."/>
            <person name="Leonard S."/>
            <person name="Rohlfing T."/>
            <person name="Rock S.M."/>
            <person name="Tin-Wollam A.-M."/>
            <person name="Abbott A."/>
            <person name="Minx P."/>
            <person name="Maupin R."/>
            <person name="Strowmatt C."/>
            <person name="Latreille P."/>
            <person name="Miller N."/>
            <person name="Johnson D."/>
            <person name="Murray J."/>
            <person name="Woessner J.P."/>
            <person name="Wendl M.C."/>
            <person name="Yang S.-P."/>
            <person name="Schultz B.R."/>
            <person name="Wallis J.W."/>
            <person name="Spieth J."/>
            <person name="Bieri T.A."/>
            <person name="Nelson J.O."/>
            <person name="Berkowicz N."/>
            <person name="Wohldmann P.E."/>
            <person name="Cook L.L."/>
            <person name="Hickenbotham M.T."/>
            <person name="Eldred J."/>
            <person name="Williams D."/>
            <person name="Bedell J.A."/>
            <person name="Mardis E.R."/>
            <person name="Clifton S.W."/>
            <person name="Chissoe S.L."/>
            <person name="Marra M.A."/>
            <person name="Raymond C."/>
            <person name="Haugen E."/>
            <person name="Gillett W."/>
            <person name="Zhou Y."/>
            <person name="James R."/>
            <person name="Phelps K."/>
            <person name="Iadanoto S."/>
            <person name="Bubb K."/>
            <person name="Simms E."/>
            <person name="Levy R."/>
            <person name="Clendenning J."/>
            <person name="Kaul R."/>
            <person name="Kent W.J."/>
            <person name="Furey T.S."/>
            <person name="Baertsch R.A."/>
            <person name="Brent M.R."/>
            <person name="Keibler E."/>
            <person name="Flicek P."/>
            <person name="Bork P."/>
            <person name="Suyama M."/>
            <person name="Bailey J.A."/>
            <person name="Portnoy M.E."/>
            <person name="Torrents D."/>
            <person name="Chinwalla A.T."/>
            <person name="Gish W.R."/>
            <person name="Eddy S.R."/>
            <person name="McPherson J.D."/>
            <person name="Olson M.V."/>
            <person name="Eichler E.E."/>
            <person name="Green E.D."/>
            <person name="Waterston R.H."/>
            <person name="Wilson R.K."/>
        </authorList>
    </citation>
    <scope>NUCLEOTIDE SEQUENCE [LARGE SCALE GENOMIC DNA]</scope>
</reference>
<reference key="2">
    <citation type="journal article" date="2003" name="Science">
        <title>Human chromosome 7: DNA sequence and biology.</title>
        <authorList>
            <person name="Scherer S.W."/>
            <person name="Cheung J."/>
            <person name="MacDonald J.R."/>
            <person name="Osborne L.R."/>
            <person name="Nakabayashi K."/>
            <person name="Herbrick J.-A."/>
            <person name="Carson A.R."/>
            <person name="Parker-Katiraee L."/>
            <person name="Skaug J."/>
            <person name="Khaja R."/>
            <person name="Zhang J."/>
            <person name="Hudek A.K."/>
            <person name="Li M."/>
            <person name="Haddad M."/>
            <person name="Duggan G.E."/>
            <person name="Fernandez B.A."/>
            <person name="Kanematsu E."/>
            <person name="Gentles S."/>
            <person name="Christopoulos C.C."/>
            <person name="Choufani S."/>
            <person name="Kwasnicka D."/>
            <person name="Zheng X.H."/>
            <person name="Lai Z."/>
            <person name="Nusskern D.R."/>
            <person name="Zhang Q."/>
            <person name="Gu Z."/>
            <person name="Lu F."/>
            <person name="Zeesman S."/>
            <person name="Nowaczyk M.J."/>
            <person name="Teshima I."/>
            <person name="Chitayat D."/>
            <person name="Shuman C."/>
            <person name="Weksberg R."/>
            <person name="Zackai E.H."/>
            <person name="Grebe T.A."/>
            <person name="Cox S.R."/>
            <person name="Kirkpatrick S.J."/>
            <person name="Rahman N."/>
            <person name="Friedman J.M."/>
            <person name="Heng H.H.Q."/>
            <person name="Pelicci P.G."/>
            <person name="Lo-Coco F."/>
            <person name="Belloni E."/>
            <person name="Shaffer L.G."/>
            <person name="Pober B."/>
            <person name="Morton C.C."/>
            <person name="Gusella J.F."/>
            <person name="Bruns G.A.P."/>
            <person name="Korf B.R."/>
            <person name="Quade B.J."/>
            <person name="Ligon A.H."/>
            <person name="Ferguson H."/>
            <person name="Higgins A.W."/>
            <person name="Leach N.T."/>
            <person name="Herrick S.R."/>
            <person name="Lemyre E."/>
            <person name="Farra C.G."/>
            <person name="Kim H.-G."/>
            <person name="Summers A.M."/>
            <person name="Gripp K.W."/>
            <person name="Roberts W."/>
            <person name="Szatmari P."/>
            <person name="Winsor E.J.T."/>
            <person name="Grzeschik K.-H."/>
            <person name="Teebi A."/>
            <person name="Minassian B.A."/>
            <person name="Kere J."/>
            <person name="Armengol L."/>
            <person name="Pujana M.A."/>
            <person name="Estivill X."/>
            <person name="Wilson M.D."/>
            <person name="Koop B.F."/>
            <person name="Tosi S."/>
            <person name="Moore G.E."/>
            <person name="Boright A.P."/>
            <person name="Zlotorynski E."/>
            <person name="Kerem B."/>
            <person name="Kroisel P.M."/>
            <person name="Petek E."/>
            <person name="Oscier D.G."/>
            <person name="Mould S.J."/>
            <person name="Doehner H."/>
            <person name="Doehner K."/>
            <person name="Rommens J.M."/>
            <person name="Vincent J.B."/>
            <person name="Venter J.C."/>
            <person name="Li P.W."/>
            <person name="Mural R.J."/>
            <person name="Adams M.D."/>
            <person name="Tsui L.-C."/>
        </authorList>
    </citation>
    <scope>NUCLEOTIDE SEQUENCE [LARGE SCALE GENOMIC DNA]</scope>
</reference>
<reference key="3">
    <citation type="journal article" date="2004" name="Genome Res.">
        <title>The status, quality, and expansion of the NIH full-length cDNA project: the Mammalian Gene Collection (MGC).</title>
        <authorList>
            <consortium name="The MGC Project Team"/>
        </authorList>
    </citation>
    <scope>NUCLEOTIDE SEQUENCE [LARGE SCALE MRNA] (ISOFORM 1)</scope>
</reference>
<reference key="4">
    <citation type="submission" date="1998-09" db="EMBL/GenBank/DDBJ databases">
        <title>Rab GTPases expressed in Caco-2 cells.</title>
        <authorList>
            <person name="Opdam F.J.M."/>
            <person name="van Bokhoven H."/>
            <person name="Kamps G."/>
            <person name="Ginsel L.A."/>
            <person name="Fransen J.A.M."/>
        </authorList>
    </citation>
    <scope>NUCLEOTIDE SEQUENCE [MRNA] OF 29-71 (ISOFORM 1)</scope>
    <source>
        <tissue>Colon carcinoma</tissue>
    </source>
</reference>
<name>RAB19_HUMAN</name>
<organism>
    <name type="scientific">Homo sapiens</name>
    <name type="common">Human</name>
    <dbReference type="NCBI Taxonomy" id="9606"/>
    <lineage>
        <taxon>Eukaryota</taxon>
        <taxon>Metazoa</taxon>
        <taxon>Chordata</taxon>
        <taxon>Craniata</taxon>
        <taxon>Vertebrata</taxon>
        <taxon>Euteleostomi</taxon>
        <taxon>Mammalia</taxon>
        <taxon>Eutheria</taxon>
        <taxon>Euarchontoglires</taxon>
        <taxon>Primates</taxon>
        <taxon>Haplorrhini</taxon>
        <taxon>Catarrhini</taxon>
        <taxon>Hominidae</taxon>
        <taxon>Homo</taxon>
    </lineage>
</organism>
<sequence>MHFSSSARAADENFDYLFKIILIGDSNVGKTCVVQHFKSGVYTETQQNTIGVDFTVRSLDIDGKKVKMQVWDTAGQERFRTITQSYYRSAHAAIIAYDLTRRSTFESIPHWIHEIEKYGAANVVIMLIGNKCDLWEKRHVLFEDACTLAEKYGLLAVLETSAKESKNIEEVFVLMAKELIARNSLHLYGESALNGLPLDSSPVLMAQGPSEKTHCTC</sequence>
<protein>
    <recommendedName>
        <fullName>Ras-related protein Rab-19</fullName>
        <ecNumber evidence="2">3.6.5.2</ecNumber>
    </recommendedName>
</protein>
<evidence type="ECO:0000250" key="1"/>
<evidence type="ECO:0000250" key="2">
    <source>
        <dbReference type="UniProtKB" id="Q9H0U4"/>
    </source>
</evidence>
<evidence type="ECO:0000305" key="3"/>
<evidence type="ECO:0000312" key="4">
    <source>
        <dbReference type="HGNC" id="HGNC:19982"/>
    </source>
</evidence>
<feature type="chain" id="PRO_0000300459" description="Ras-related protein Rab-19">
    <location>
        <begin position="1"/>
        <end position="217"/>
    </location>
</feature>
<feature type="short sequence motif" description="Switch 1" evidence="2">
    <location>
        <begin position="39"/>
        <end position="54"/>
    </location>
</feature>
<feature type="short sequence motif" description="Switch 2" evidence="2">
    <location>
        <begin position="74"/>
        <end position="89"/>
    </location>
</feature>
<feature type="binding site" evidence="2">
    <location>
        <position position="26"/>
    </location>
    <ligand>
        <name>GTP</name>
        <dbReference type="ChEBI" id="CHEBI:37565"/>
    </ligand>
</feature>
<feature type="binding site" evidence="2">
    <location>
        <position position="28"/>
    </location>
    <ligand>
        <name>GTP</name>
        <dbReference type="ChEBI" id="CHEBI:37565"/>
    </ligand>
</feature>
<feature type="binding site" evidence="2">
    <location>
        <position position="29"/>
    </location>
    <ligand>
        <name>GTP</name>
        <dbReference type="ChEBI" id="CHEBI:37565"/>
    </ligand>
</feature>
<feature type="binding site" evidence="2">
    <location>
        <position position="30"/>
    </location>
    <ligand>
        <name>GTP</name>
        <dbReference type="ChEBI" id="CHEBI:37565"/>
    </ligand>
</feature>
<feature type="binding site" evidence="2">
    <location>
        <position position="31"/>
    </location>
    <ligand>
        <name>GTP</name>
        <dbReference type="ChEBI" id="CHEBI:37565"/>
    </ligand>
</feature>
<feature type="binding site" evidence="2">
    <location>
        <position position="31"/>
    </location>
    <ligand>
        <name>Mg(2+)</name>
        <dbReference type="ChEBI" id="CHEBI:18420"/>
    </ligand>
</feature>
<feature type="binding site" evidence="2">
    <location>
        <position position="32"/>
    </location>
    <ligand>
        <name>GTP</name>
        <dbReference type="ChEBI" id="CHEBI:37565"/>
    </ligand>
</feature>
<feature type="binding site" evidence="2">
    <location>
        <position position="42"/>
    </location>
    <ligand>
        <name>GTP</name>
        <dbReference type="ChEBI" id="CHEBI:37565"/>
    </ligand>
</feature>
<feature type="binding site" evidence="2">
    <location>
        <position position="43"/>
    </location>
    <ligand>
        <name>GTP</name>
        <dbReference type="ChEBI" id="CHEBI:37565"/>
    </ligand>
</feature>
<feature type="binding site" evidence="2">
    <location>
        <position position="44"/>
    </location>
    <ligand>
        <name>GTP</name>
        <dbReference type="ChEBI" id="CHEBI:37565"/>
    </ligand>
</feature>
<feature type="binding site" evidence="2">
    <location>
        <position position="45"/>
    </location>
    <ligand>
        <name>GTP</name>
        <dbReference type="ChEBI" id="CHEBI:37565"/>
    </ligand>
</feature>
<feature type="binding site" evidence="2">
    <location>
        <position position="49"/>
    </location>
    <ligand>
        <name>GTP</name>
        <dbReference type="ChEBI" id="CHEBI:37565"/>
    </ligand>
</feature>
<feature type="binding site" evidence="2">
    <location>
        <position position="49"/>
    </location>
    <ligand>
        <name>Mg(2+)</name>
        <dbReference type="ChEBI" id="CHEBI:18420"/>
    </ligand>
</feature>
<feature type="binding site" evidence="2">
    <location>
        <position position="72"/>
    </location>
    <ligand>
        <name>Mg(2+)</name>
        <dbReference type="ChEBI" id="CHEBI:18420"/>
    </ligand>
</feature>
<feature type="binding site" evidence="2">
    <location>
        <position position="75"/>
    </location>
    <ligand>
        <name>GTP</name>
        <dbReference type="ChEBI" id="CHEBI:37565"/>
    </ligand>
</feature>
<feature type="binding site" evidence="2">
    <location>
        <position position="130"/>
    </location>
    <ligand>
        <name>GTP</name>
        <dbReference type="ChEBI" id="CHEBI:37565"/>
    </ligand>
</feature>
<feature type="binding site" evidence="2">
    <location>
        <position position="131"/>
    </location>
    <ligand>
        <name>GTP</name>
        <dbReference type="ChEBI" id="CHEBI:37565"/>
    </ligand>
</feature>
<feature type="binding site" evidence="2">
    <location>
        <position position="133"/>
    </location>
    <ligand>
        <name>GTP</name>
        <dbReference type="ChEBI" id="CHEBI:37565"/>
    </ligand>
</feature>
<feature type="binding site" evidence="2">
    <location>
        <position position="161"/>
    </location>
    <ligand>
        <name>GTP</name>
        <dbReference type="ChEBI" id="CHEBI:37565"/>
    </ligand>
</feature>
<feature type="binding site" evidence="2">
    <location>
        <position position="162"/>
    </location>
    <ligand>
        <name>GTP</name>
        <dbReference type="ChEBI" id="CHEBI:37565"/>
    </ligand>
</feature>
<feature type="binding site" evidence="2">
    <location>
        <position position="163"/>
    </location>
    <ligand>
        <name>GTP</name>
        <dbReference type="ChEBI" id="CHEBI:37565"/>
    </ligand>
</feature>
<feature type="modified residue" description="Cysteine methyl ester" evidence="1">
    <location>
        <position position="217"/>
    </location>
</feature>
<feature type="lipid moiety-binding region" description="S-geranylgeranyl cysteine" evidence="1">
    <location>
        <position position="215"/>
    </location>
</feature>
<feature type="lipid moiety-binding region" description="S-geranylgeranyl cysteine" evidence="1">
    <location>
        <position position="217"/>
    </location>
</feature>
<feature type="splice variant" id="VSP_036588" description="In isoform 2." evidence="3">
    <original>K</original>
    <variation>KNSSASIITFASIQIHGQTQKMSPQIWTKSSHYLWEPLIWTLLPVLLQ</variation>
    <location>
        <position position="67"/>
    </location>
</feature>
<feature type="sequence conflict" description="In Ref. 4; AAF00046." evidence="3" ref="4">
    <original>T</original>
    <variation>S</variation>
    <location>
        <position position="31"/>
    </location>
</feature>
<dbReference type="EC" id="3.6.5.2" evidence="2"/>
<dbReference type="EMBL" id="AC069335">
    <property type="status" value="NOT_ANNOTATED_CDS"/>
    <property type="molecule type" value="Genomic_DNA"/>
</dbReference>
<dbReference type="EMBL" id="AC093087">
    <property type="status" value="NOT_ANNOTATED_CDS"/>
    <property type="molecule type" value="Genomic_DNA"/>
</dbReference>
<dbReference type="EMBL" id="CH236950">
    <property type="protein sequence ID" value="EAL24028.1"/>
    <property type="molecule type" value="Genomic_DNA"/>
</dbReference>
<dbReference type="EMBL" id="CH236950">
    <property type="protein sequence ID" value="EAL24029.1"/>
    <property type="molecule type" value="Genomic_DNA"/>
</dbReference>
<dbReference type="EMBL" id="BC140796">
    <property type="protein sequence ID" value="AAI40797.1"/>
    <property type="molecule type" value="mRNA"/>
</dbReference>
<dbReference type="EMBL" id="AF091033">
    <property type="protein sequence ID" value="AAF00046.1"/>
    <property type="molecule type" value="mRNA"/>
</dbReference>
<dbReference type="CCDS" id="CCDS34762.2">
    <molecule id="A4D1S5-1"/>
</dbReference>
<dbReference type="RefSeq" id="NP_001008749.2">
    <molecule id="A4D1S5-1"/>
    <property type="nucleotide sequence ID" value="NM_001008749.3"/>
</dbReference>
<dbReference type="RefSeq" id="XP_005250053.1">
    <molecule id="A4D1S5-1"/>
    <property type="nucleotide sequence ID" value="XM_005249996.4"/>
</dbReference>
<dbReference type="RefSeq" id="XP_016867696.1">
    <molecule id="A4D1S5-1"/>
    <property type="nucleotide sequence ID" value="XM_017012207.2"/>
</dbReference>
<dbReference type="RefSeq" id="XP_054214191.1">
    <molecule id="A4D1S5-1"/>
    <property type="nucleotide sequence ID" value="XM_054358216.1"/>
</dbReference>
<dbReference type="RefSeq" id="XP_054214192.1">
    <molecule id="A4D1S5-1"/>
    <property type="nucleotide sequence ID" value="XM_054358217.1"/>
</dbReference>
<dbReference type="SMR" id="A4D1S5"/>
<dbReference type="BioGRID" id="135075">
    <property type="interactions" value="11"/>
</dbReference>
<dbReference type="FunCoup" id="A4D1S5">
    <property type="interactions" value="416"/>
</dbReference>
<dbReference type="IntAct" id="A4D1S5">
    <property type="interactions" value="7"/>
</dbReference>
<dbReference type="STRING" id="9606.ENSP00000440167"/>
<dbReference type="iPTMnet" id="A4D1S5"/>
<dbReference type="PhosphoSitePlus" id="A4D1S5"/>
<dbReference type="BioMuta" id="RAB19"/>
<dbReference type="jPOST" id="A4D1S5"/>
<dbReference type="MassIVE" id="A4D1S5"/>
<dbReference type="PaxDb" id="9606-ENSP00000440167"/>
<dbReference type="PeptideAtlas" id="A4D1S5"/>
<dbReference type="ProteomicsDB" id="629">
    <molecule id="A4D1S5-1"/>
</dbReference>
<dbReference type="ProteomicsDB" id="630">
    <molecule id="A4D1S5-2"/>
</dbReference>
<dbReference type="Pumba" id="A4D1S5"/>
<dbReference type="Antibodypedia" id="32445">
    <property type="antibodies" value="92 antibodies from 21 providers"/>
</dbReference>
<dbReference type="DNASU" id="401409"/>
<dbReference type="Ensembl" id="ENST00000356407.3">
    <molecule id="A4D1S5-1"/>
    <property type="protein sequence ID" value="ENSP00000348778.3"/>
    <property type="gene ID" value="ENSG00000146955.11"/>
</dbReference>
<dbReference type="Ensembl" id="ENST00000537763.6">
    <molecule id="A4D1S5-1"/>
    <property type="protein sequence ID" value="ENSP00000440167.1"/>
    <property type="gene ID" value="ENSG00000146955.11"/>
</dbReference>
<dbReference type="GeneID" id="401409"/>
<dbReference type="KEGG" id="hsa:401409"/>
<dbReference type="MANE-Select" id="ENST00000537763.6">
    <property type="protein sequence ID" value="ENSP00000440167.1"/>
    <property type="RefSeq nucleotide sequence ID" value="NM_001008749.3"/>
    <property type="RefSeq protein sequence ID" value="NP_001008749.2"/>
</dbReference>
<dbReference type="UCSC" id="uc010lni.2">
    <molecule id="A4D1S5-1"/>
    <property type="organism name" value="human"/>
</dbReference>
<dbReference type="AGR" id="HGNC:19982"/>
<dbReference type="CTD" id="401409"/>
<dbReference type="DisGeNET" id="401409"/>
<dbReference type="GeneCards" id="RAB19"/>
<dbReference type="HGNC" id="HGNC:19982">
    <property type="gene designation" value="RAB19"/>
</dbReference>
<dbReference type="HPA" id="ENSG00000146955">
    <property type="expression patterns" value="Tissue enhanced (bone)"/>
</dbReference>
<dbReference type="neXtProt" id="NX_A4D1S5"/>
<dbReference type="OpenTargets" id="ENSG00000146955"/>
<dbReference type="PharmGKB" id="PA162400617"/>
<dbReference type="VEuPathDB" id="HostDB:ENSG00000146955"/>
<dbReference type="eggNOG" id="KOG0084">
    <property type="taxonomic scope" value="Eukaryota"/>
</dbReference>
<dbReference type="GeneTree" id="ENSGT00940000156717"/>
<dbReference type="HOGENOM" id="CLU_041217_23_1_1"/>
<dbReference type="InParanoid" id="A4D1S5"/>
<dbReference type="OMA" id="DMWEKRH"/>
<dbReference type="OrthoDB" id="9989112at2759"/>
<dbReference type="PAN-GO" id="A4D1S5">
    <property type="GO annotations" value="4 GO annotations based on evolutionary models"/>
</dbReference>
<dbReference type="PhylomeDB" id="A4D1S5"/>
<dbReference type="TreeFam" id="TF300097"/>
<dbReference type="PathwayCommons" id="A4D1S5"/>
<dbReference type="Reactome" id="R-HSA-8873719">
    <property type="pathway name" value="RAB geranylgeranylation"/>
</dbReference>
<dbReference type="SignaLink" id="A4D1S5"/>
<dbReference type="BioGRID-ORCS" id="401409">
    <property type="hits" value="10 hits in 1147 CRISPR screens"/>
</dbReference>
<dbReference type="ChiTaRS" id="RAB19">
    <property type="organism name" value="human"/>
</dbReference>
<dbReference type="GenomeRNAi" id="401409"/>
<dbReference type="Pharos" id="A4D1S5">
    <property type="development level" value="Tbio"/>
</dbReference>
<dbReference type="PRO" id="PR:A4D1S5"/>
<dbReference type="Proteomes" id="UP000005640">
    <property type="component" value="Chromosome 7"/>
</dbReference>
<dbReference type="RNAct" id="A4D1S5">
    <property type="molecule type" value="protein"/>
</dbReference>
<dbReference type="Bgee" id="ENSG00000146955">
    <property type="expression patterns" value="Expressed in mucosa of transverse colon and 55 other cell types or tissues"/>
</dbReference>
<dbReference type="GO" id="GO:0012505">
    <property type="term" value="C:endomembrane system"/>
    <property type="evidence" value="ECO:0000318"/>
    <property type="project" value="GO_Central"/>
</dbReference>
<dbReference type="GO" id="GO:0070062">
    <property type="term" value="C:extracellular exosome"/>
    <property type="evidence" value="ECO:0007005"/>
    <property type="project" value="UniProtKB"/>
</dbReference>
<dbReference type="GO" id="GO:0005886">
    <property type="term" value="C:plasma membrane"/>
    <property type="evidence" value="ECO:0007669"/>
    <property type="project" value="UniProtKB-SubCell"/>
</dbReference>
<dbReference type="GO" id="GO:0005525">
    <property type="term" value="F:GTP binding"/>
    <property type="evidence" value="ECO:0007669"/>
    <property type="project" value="UniProtKB-KW"/>
</dbReference>
<dbReference type="GO" id="GO:0003924">
    <property type="term" value="F:GTPase activity"/>
    <property type="evidence" value="ECO:0000318"/>
    <property type="project" value="GO_Central"/>
</dbReference>
<dbReference type="GO" id="GO:0000045">
    <property type="term" value="P:autophagosome assembly"/>
    <property type="evidence" value="ECO:0000318"/>
    <property type="project" value="GO_Central"/>
</dbReference>
<dbReference type="GO" id="GO:0006886">
    <property type="term" value="P:intracellular protein transport"/>
    <property type="evidence" value="ECO:0000318"/>
    <property type="project" value="GO_Central"/>
</dbReference>
<dbReference type="CDD" id="cd01864">
    <property type="entry name" value="Rab19"/>
    <property type="match status" value="1"/>
</dbReference>
<dbReference type="FunFam" id="3.40.50.300:FF:000887">
    <property type="entry name" value="Ras-related protein Rab-19"/>
    <property type="match status" value="1"/>
</dbReference>
<dbReference type="Gene3D" id="3.40.50.300">
    <property type="entry name" value="P-loop containing nucleotide triphosphate hydrolases"/>
    <property type="match status" value="1"/>
</dbReference>
<dbReference type="InterPro" id="IPR027417">
    <property type="entry name" value="P-loop_NTPase"/>
</dbReference>
<dbReference type="InterPro" id="IPR048040">
    <property type="entry name" value="Rab19/43"/>
</dbReference>
<dbReference type="InterPro" id="IPR050209">
    <property type="entry name" value="Rab_GTPases_membrane_traffic"/>
</dbReference>
<dbReference type="InterPro" id="IPR005225">
    <property type="entry name" value="Small_GTP-bd"/>
</dbReference>
<dbReference type="InterPro" id="IPR001806">
    <property type="entry name" value="Small_GTPase"/>
</dbReference>
<dbReference type="NCBIfam" id="TIGR00231">
    <property type="entry name" value="small_GTP"/>
    <property type="match status" value="1"/>
</dbReference>
<dbReference type="PANTHER" id="PTHR47979">
    <property type="entry name" value="DRAB11-RELATED"/>
    <property type="match status" value="1"/>
</dbReference>
<dbReference type="Pfam" id="PF00071">
    <property type="entry name" value="Ras"/>
    <property type="match status" value="1"/>
</dbReference>
<dbReference type="PRINTS" id="PR00449">
    <property type="entry name" value="RASTRNSFRMNG"/>
</dbReference>
<dbReference type="SMART" id="SM00175">
    <property type="entry name" value="RAB"/>
    <property type="match status" value="1"/>
</dbReference>
<dbReference type="SMART" id="SM00176">
    <property type="entry name" value="RAN"/>
    <property type="match status" value="1"/>
</dbReference>
<dbReference type="SMART" id="SM00173">
    <property type="entry name" value="RAS"/>
    <property type="match status" value="1"/>
</dbReference>
<dbReference type="SMART" id="SM00174">
    <property type="entry name" value="RHO"/>
    <property type="match status" value="1"/>
</dbReference>
<dbReference type="SUPFAM" id="SSF52540">
    <property type="entry name" value="P-loop containing nucleoside triphosphate hydrolases"/>
    <property type="match status" value="1"/>
</dbReference>
<dbReference type="PROSITE" id="PS51419">
    <property type="entry name" value="RAB"/>
    <property type="match status" value="1"/>
</dbReference>
<keyword id="KW-0025">Alternative splicing</keyword>
<keyword id="KW-1003">Cell membrane</keyword>
<keyword id="KW-0342">GTP-binding</keyword>
<keyword id="KW-0378">Hydrolase</keyword>
<keyword id="KW-0449">Lipoprotein</keyword>
<keyword id="KW-0460">Magnesium</keyword>
<keyword id="KW-0472">Membrane</keyword>
<keyword id="KW-0479">Metal-binding</keyword>
<keyword id="KW-0488">Methylation</keyword>
<keyword id="KW-0547">Nucleotide-binding</keyword>
<keyword id="KW-0636">Prenylation</keyword>
<keyword id="KW-1267">Proteomics identification</keyword>
<keyword id="KW-1185">Reference proteome</keyword>
<proteinExistence type="evidence at protein level"/>
<comment type="function">
    <text evidence="2">The small GTPases Rab are key regulators of intracellular membrane trafficking, from the formation of transport vesicles to their fusion with membranes. Rabs cycle between an inactive GDP-bound form and an active GTP-bound form that is able to recruit to membranes different set of downstream effectors directly responsible for vesicle formation, movement, tethering and fusion.</text>
</comment>
<comment type="catalytic activity">
    <reaction evidence="2">
        <text>GTP + H2O = GDP + phosphate + H(+)</text>
        <dbReference type="Rhea" id="RHEA:19669"/>
        <dbReference type="ChEBI" id="CHEBI:15377"/>
        <dbReference type="ChEBI" id="CHEBI:15378"/>
        <dbReference type="ChEBI" id="CHEBI:37565"/>
        <dbReference type="ChEBI" id="CHEBI:43474"/>
        <dbReference type="ChEBI" id="CHEBI:58189"/>
        <dbReference type="EC" id="3.6.5.2"/>
    </reaction>
    <physiologicalReaction direction="left-to-right" evidence="2">
        <dbReference type="Rhea" id="RHEA:19670"/>
    </physiologicalReaction>
</comment>
<comment type="cofactor">
    <cofactor evidence="2">
        <name>Mg(2+)</name>
        <dbReference type="ChEBI" id="CHEBI:18420"/>
    </cofactor>
</comment>
<comment type="activity regulation">
    <text evidence="3">Regulated by guanine nucleotide exchange factors (GEFs) which promote the exchange of bound GDP for free GTP. Regulated by GTPase activating proteins (GAPs) which increase the GTP hydrolysis activity. Inhibited by GDP dissociation inhibitors (GDIs).</text>
</comment>
<comment type="interaction">
    <interactant intactId="EBI-4401710">
        <id>A4D1S5</id>
    </interactant>
    <interactant intactId="EBI-10171774">
        <id>P60410</id>
        <label>KRTAP10-8</label>
    </interactant>
    <organismsDiffer>false</organismsDiffer>
    <experiments>3</experiments>
</comment>
<comment type="interaction">
    <interactant intactId="EBI-4401710">
        <id>A4D1S5</id>
    </interactant>
    <interactant intactId="EBI-2626024">
        <id>P83369</id>
        <label>LSM11</label>
    </interactant>
    <organismsDiffer>false</organismsDiffer>
    <experiments>3</experiments>
</comment>
<comment type="interaction">
    <interactant intactId="EBI-4401710">
        <id>A4D1S5</id>
    </interactant>
    <interactant intactId="EBI-713992">
        <id>P47224</id>
        <label>RABIF</label>
    </interactant>
    <organismsDiffer>false</organismsDiffer>
    <experiments>5</experiments>
</comment>
<comment type="interaction">
    <interactant intactId="EBI-4401710">
        <id>A4D1S5</id>
    </interactant>
    <interactant intactId="EBI-23901925">
        <id>Q86W61</id>
        <label>VCAN</label>
    </interactant>
    <organismsDiffer>false</organismsDiffer>
    <experiments>3</experiments>
</comment>
<comment type="subcellular location">
    <subcellularLocation>
        <location evidence="3">Cell membrane</location>
        <topology evidence="3">Lipid-anchor</topology>
        <orientation evidence="3">Cytoplasmic side</orientation>
    </subcellularLocation>
</comment>
<comment type="alternative products">
    <event type="alternative splicing"/>
    <isoform>
        <id>A4D1S5-1</id>
        <name>1</name>
        <sequence type="displayed"/>
    </isoform>
    <isoform>
        <id>A4D1S5-2</id>
        <name>2</name>
        <sequence type="described" ref="VSP_036588"/>
    </isoform>
</comment>
<comment type="domain">
    <text evidence="2">Switch 1, switch 2 and the interswitch regions are characteristic of Rab GTPases and mediate the interactions with Rab downstream effectors. The switch regions undergo conformational changes upon nucleotide binding which drives interaction with specific sets of effector proteins, with most effectors only binding to GTP-bound Rab.</text>
</comment>
<comment type="similarity">
    <text evidence="3">Belongs to the small GTPase superfamily. Rab family.</text>
</comment>
<gene>
    <name evidence="4" type="primary">RAB19</name>
    <name type="synonym">RAB19B</name>
</gene>
<accession>A4D1S5</accession>
<accession>A4D1S6</accession>
<accession>B2RTS6</accession>
<accession>B5MDR2</accession>
<accession>Q9UL27</accession>